<protein>
    <recommendedName>
        <fullName evidence="1">Large ribosomal subunit protein bL12</fullName>
    </recommendedName>
    <alternativeName>
        <fullName evidence="2">50S ribosomal protein L7/L12</fullName>
    </alternativeName>
</protein>
<sequence length="126" mass="12597">MADLNAIADQIQGLTLLEASQLVKMLEEKLGVSAAAAVAAPAAGGGAAAAAPAAEEKTEFTVVLTGAGANKINVIKAVREVTSLGLKEAKDLVDGAPKPIKEGVSKEEAATIAKKFTDAGATVEVK</sequence>
<feature type="chain" id="PRO_1000072118" description="Large ribosomal subunit protein bL12">
    <location>
        <begin position="1"/>
        <end position="126"/>
    </location>
</feature>
<comment type="function">
    <text evidence="1">Forms part of the ribosomal stalk which helps the ribosome interact with GTP-bound translation factors. Is thus essential for accurate translation.</text>
</comment>
<comment type="subunit">
    <text evidence="1">Homodimer. Part of the ribosomal stalk of the 50S ribosomal subunit. Forms a multimeric L10(L12)X complex, where L10 forms an elongated spine to which 2 to 4 L12 dimers bind in a sequential fashion. Binds GTP-bound translation factors.</text>
</comment>
<comment type="similarity">
    <text evidence="1">Belongs to the bacterial ribosomal protein bL12 family.</text>
</comment>
<dbReference type="EMBL" id="CP000473">
    <property type="protein sequence ID" value="ABJ86405.1"/>
    <property type="molecule type" value="Genomic_DNA"/>
</dbReference>
<dbReference type="SMR" id="Q01VB0"/>
<dbReference type="FunCoup" id="Q01VB0">
    <property type="interactions" value="745"/>
</dbReference>
<dbReference type="STRING" id="234267.Acid_5458"/>
<dbReference type="KEGG" id="sus:Acid_5458"/>
<dbReference type="eggNOG" id="COG0222">
    <property type="taxonomic scope" value="Bacteria"/>
</dbReference>
<dbReference type="HOGENOM" id="CLU_086499_3_2_0"/>
<dbReference type="InParanoid" id="Q01VB0"/>
<dbReference type="OrthoDB" id="9811748at2"/>
<dbReference type="GO" id="GO:0005737">
    <property type="term" value="C:cytoplasm"/>
    <property type="evidence" value="ECO:0007669"/>
    <property type="project" value="UniProtKB-ARBA"/>
</dbReference>
<dbReference type="GO" id="GO:1990904">
    <property type="term" value="C:ribonucleoprotein complex"/>
    <property type="evidence" value="ECO:0007669"/>
    <property type="project" value="UniProtKB-KW"/>
</dbReference>
<dbReference type="GO" id="GO:0005840">
    <property type="term" value="C:ribosome"/>
    <property type="evidence" value="ECO:0007669"/>
    <property type="project" value="UniProtKB-KW"/>
</dbReference>
<dbReference type="GO" id="GO:0003729">
    <property type="term" value="F:mRNA binding"/>
    <property type="evidence" value="ECO:0007669"/>
    <property type="project" value="TreeGrafter"/>
</dbReference>
<dbReference type="GO" id="GO:0003735">
    <property type="term" value="F:structural constituent of ribosome"/>
    <property type="evidence" value="ECO:0007669"/>
    <property type="project" value="InterPro"/>
</dbReference>
<dbReference type="GO" id="GO:0006412">
    <property type="term" value="P:translation"/>
    <property type="evidence" value="ECO:0007669"/>
    <property type="project" value="UniProtKB-UniRule"/>
</dbReference>
<dbReference type="CDD" id="cd00387">
    <property type="entry name" value="Ribosomal_L7_L12"/>
    <property type="match status" value="1"/>
</dbReference>
<dbReference type="FunFam" id="3.30.1390.10:FF:000001">
    <property type="entry name" value="50S ribosomal protein L7/L12"/>
    <property type="match status" value="1"/>
</dbReference>
<dbReference type="Gene3D" id="3.30.1390.10">
    <property type="match status" value="1"/>
</dbReference>
<dbReference type="Gene3D" id="1.20.5.710">
    <property type="entry name" value="Single helix bin"/>
    <property type="match status" value="1"/>
</dbReference>
<dbReference type="HAMAP" id="MF_00368">
    <property type="entry name" value="Ribosomal_bL12"/>
    <property type="match status" value="1"/>
</dbReference>
<dbReference type="InterPro" id="IPR000206">
    <property type="entry name" value="Ribosomal_bL12"/>
</dbReference>
<dbReference type="InterPro" id="IPR013823">
    <property type="entry name" value="Ribosomal_bL12_C"/>
</dbReference>
<dbReference type="InterPro" id="IPR014719">
    <property type="entry name" value="Ribosomal_bL12_C/ClpS-like"/>
</dbReference>
<dbReference type="InterPro" id="IPR008932">
    <property type="entry name" value="Ribosomal_bL12_oligo"/>
</dbReference>
<dbReference type="InterPro" id="IPR036235">
    <property type="entry name" value="Ribosomal_bL12_oligo_N_sf"/>
</dbReference>
<dbReference type="NCBIfam" id="TIGR00855">
    <property type="entry name" value="L12"/>
    <property type="match status" value="1"/>
</dbReference>
<dbReference type="PANTHER" id="PTHR45987">
    <property type="entry name" value="39S RIBOSOMAL PROTEIN L12"/>
    <property type="match status" value="1"/>
</dbReference>
<dbReference type="PANTHER" id="PTHR45987:SF4">
    <property type="entry name" value="LARGE RIBOSOMAL SUBUNIT PROTEIN BL12M"/>
    <property type="match status" value="1"/>
</dbReference>
<dbReference type="Pfam" id="PF00542">
    <property type="entry name" value="Ribosomal_L12"/>
    <property type="match status" value="1"/>
</dbReference>
<dbReference type="Pfam" id="PF16320">
    <property type="entry name" value="Ribosomal_L12_N"/>
    <property type="match status" value="1"/>
</dbReference>
<dbReference type="SUPFAM" id="SSF54736">
    <property type="entry name" value="ClpS-like"/>
    <property type="match status" value="1"/>
</dbReference>
<dbReference type="SUPFAM" id="SSF48300">
    <property type="entry name" value="Ribosomal protein L7/12, oligomerisation (N-terminal) domain"/>
    <property type="match status" value="1"/>
</dbReference>
<name>RL7_SOLUE</name>
<reference key="1">
    <citation type="journal article" date="2009" name="Appl. Environ. Microbiol.">
        <title>Three genomes from the phylum Acidobacteria provide insight into the lifestyles of these microorganisms in soils.</title>
        <authorList>
            <person name="Ward N.L."/>
            <person name="Challacombe J.F."/>
            <person name="Janssen P.H."/>
            <person name="Henrissat B."/>
            <person name="Coutinho P.M."/>
            <person name="Wu M."/>
            <person name="Xie G."/>
            <person name="Haft D.H."/>
            <person name="Sait M."/>
            <person name="Badger J."/>
            <person name="Barabote R.D."/>
            <person name="Bradley B."/>
            <person name="Brettin T.S."/>
            <person name="Brinkac L.M."/>
            <person name="Bruce D."/>
            <person name="Creasy T."/>
            <person name="Daugherty S.C."/>
            <person name="Davidsen T.M."/>
            <person name="DeBoy R.T."/>
            <person name="Detter J.C."/>
            <person name="Dodson R.J."/>
            <person name="Durkin A.S."/>
            <person name="Ganapathy A."/>
            <person name="Gwinn-Giglio M."/>
            <person name="Han C.S."/>
            <person name="Khouri H."/>
            <person name="Kiss H."/>
            <person name="Kothari S.P."/>
            <person name="Madupu R."/>
            <person name="Nelson K.E."/>
            <person name="Nelson W.C."/>
            <person name="Paulsen I."/>
            <person name="Penn K."/>
            <person name="Ren Q."/>
            <person name="Rosovitz M.J."/>
            <person name="Selengut J.D."/>
            <person name="Shrivastava S."/>
            <person name="Sullivan S.A."/>
            <person name="Tapia R."/>
            <person name="Thompson L.S."/>
            <person name="Watkins K.L."/>
            <person name="Yang Q."/>
            <person name="Yu C."/>
            <person name="Zafar N."/>
            <person name="Zhou L."/>
            <person name="Kuske C.R."/>
        </authorList>
    </citation>
    <scope>NUCLEOTIDE SEQUENCE [LARGE SCALE GENOMIC DNA]</scope>
    <source>
        <strain>Ellin6076</strain>
    </source>
</reference>
<gene>
    <name evidence="1" type="primary">rplL</name>
    <name type="ordered locus">Acid_5458</name>
</gene>
<organism>
    <name type="scientific">Solibacter usitatus (strain Ellin6076)</name>
    <dbReference type="NCBI Taxonomy" id="234267"/>
    <lineage>
        <taxon>Bacteria</taxon>
        <taxon>Pseudomonadati</taxon>
        <taxon>Acidobacteriota</taxon>
        <taxon>Terriglobia</taxon>
        <taxon>Bryobacterales</taxon>
        <taxon>Solibacteraceae</taxon>
        <taxon>Candidatus Solibacter</taxon>
    </lineage>
</organism>
<keyword id="KW-0687">Ribonucleoprotein</keyword>
<keyword id="KW-0689">Ribosomal protein</keyword>
<accession>Q01VB0</accession>
<evidence type="ECO:0000255" key="1">
    <source>
        <dbReference type="HAMAP-Rule" id="MF_00368"/>
    </source>
</evidence>
<evidence type="ECO:0000305" key="2"/>
<proteinExistence type="inferred from homology"/>